<comment type="function">
    <text evidence="1">Catalyzes the ATP-dependent transfer of a sulfur to tRNA to produce 4-thiouridine in position 8 of tRNAs, which functions as a near-UV photosensor. Also catalyzes the transfer of sulfur to the sulfur carrier protein ThiS, forming ThiS-thiocarboxylate. This is a step in the synthesis of thiazole, in the thiamine biosynthesis pathway. The sulfur is donated as persulfide by IscS.</text>
</comment>
<comment type="catalytic activity">
    <reaction evidence="1">
        <text>[ThiI sulfur-carrier protein]-S-sulfanyl-L-cysteine + a uridine in tRNA + 2 reduced [2Fe-2S]-[ferredoxin] + ATP + H(+) = [ThiI sulfur-carrier protein]-L-cysteine + a 4-thiouridine in tRNA + 2 oxidized [2Fe-2S]-[ferredoxin] + AMP + diphosphate</text>
        <dbReference type="Rhea" id="RHEA:24176"/>
        <dbReference type="Rhea" id="RHEA-COMP:10000"/>
        <dbReference type="Rhea" id="RHEA-COMP:10001"/>
        <dbReference type="Rhea" id="RHEA-COMP:13337"/>
        <dbReference type="Rhea" id="RHEA-COMP:13338"/>
        <dbReference type="Rhea" id="RHEA-COMP:13339"/>
        <dbReference type="Rhea" id="RHEA-COMP:13340"/>
        <dbReference type="ChEBI" id="CHEBI:15378"/>
        <dbReference type="ChEBI" id="CHEBI:29950"/>
        <dbReference type="ChEBI" id="CHEBI:30616"/>
        <dbReference type="ChEBI" id="CHEBI:33019"/>
        <dbReference type="ChEBI" id="CHEBI:33737"/>
        <dbReference type="ChEBI" id="CHEBI:33738"/>
        <dbReference type="ChEBI" id="CHEBI:61963"/>
        <dbReference type="ChEBI" id="CHEBI:65315"/>
        <dbReference type="ChEBI" id="CHEBI:136798"/>
        <dbReference type="ChEBI" id="CHEBI:456215"/>
        <dbReference type="EC" id="2.8.1.4"/>
    </reaction>
</comment>
<comment type="catalytic activity">
    <reaction evidence="1">
        <text>[ThiS sulfur-carrier protein]-C-terminal Gly-Gly-AMP + S-sulfanyl-L-cysteinyl-[cysteine desulfurase] + AH2 = [ThiS sulfur-carrier protein]-C-terminal-Gly-aminoethanethioate + L-cysteinyl-[cysteine desulfurase] + A + AMP + 2 H(+)</text>
        <dbReference type="Rhea" id="RHEA:43340"/>
        <dbReference type="Rhea" id="RHEA-COMP:12157"/>
        <dbReference type="Rhea" id="RHEA-COMP:12158"/>
        <dbReference type="Rhea" id="RHEA-COMP:12910"/>
        <dbReference type="Rhea" id="RHEA-COMP:19908"/>
        <dbReference type="ChEBI" id="CHEBI:13193"/>
        <dbReference type="ChEBI" id="CHEBI:15378"/>
        <dbReference type="ChEBI" id="CHEBI:17499"/>
        <dbReference type="ChEBI" id="CHEBI:29950"/>
        <dbReference type="ChEBI" id="CHEBI:61963"/>
        <dbReference type="ChEBI" id="CHEBI:90618"/>
        <dbReference type="ChEBI" id="CHEBI:232372"/>
        <dbReference type="ChEBI" id="CHEBI:456215"/>
    </reaction>
</comment>
<comment type="pathway">
    <text evidence="1">Cofactor biosynthesis; thiamine diphosphate biosynthesis.</text>
</comment>
<comment type="subcellular location">
    <subcellularLocation>
        <location evidence="1">Cytoplasm</location>
    </subcellularLocation>
</comment>
<comment type="similarity">
    <text evidence="1">Belongs to the ThiI family.</text>
</comment>
<dbReference type="EC" id="2.8.1.4" evidence="1"/>
<dbReference type="EMBL" id="CP000507">
    <property type="protein sequence ID" value="ABM00636.1"/>
    <property type="molecule type" value="Genomic_DNA"/>
</dbReference>
<dbReference type="RefSeq" id="WP_011760542.1">
    <property type="nucleotide sequence ID" value="NC_008700.1"/>
</dbReference>
<dbReference type="SMR" id="A1S8C9"/>
<dbReference type="STRING" id="326297.Sama_2431"/>
<dbReference type="KEGG" id="saz:Sama_2431"/>
<dbReference type="eggNOG" id="COG0301">
    <property type="taxonomic scope" value="Bacteria"/>
</dbReference>
<dbReference type="eggNOG" id="COG0607">
    <property type="taxonomic scope" value="Bacteria"/>
</dbReference>
<dbReference type="HOGENOM" id="CLU_037952_4_1_6"/>
<dbReference type="OrthoDB" id="9773948at2"/>
<dbReference type="UniPathway" id="UPA00060"/>
<dbReference type="Proteomes" id="UP000009175">
    <property type="component" value="Chromosome"/>
</dbReference>
<dbReference type="GO" id="GO:0005829">
    <property type="term" value="C:cytosol"/>
    <property type="evidence" value="ECO:0007669"/>
    <property type="project" value="TreeGrafter"/>
</dbReference>
<dbReference type="GO" id="GO:0005524">
    <property type="term" value="F:ATP binding"/>
    <property type="evidence" value="ECO:0007669"/>
    <property type="project" value="UniProtKB-UniRule"/>
</dbReference>
<dbReference type="GO" id="GO:0004810">
    <property type="term" value="F:CCA tRNA nucleotidyltransferase activity"/>
    <property type="evidence" value="ECO:0007669"/>
    <property type="project" value="InterPro"/>
</dbReference>
<dbReference type="GO" id="GO:0000049">
    <property type="term" value="F:tRNA binding"/>
    <property type="evidence" value="ECO:0007669"/>
    <property type="project" value="UniProtKB-UniRule"/>
</dbReference>
<dbReference type="GO" id="GO:0140741">
    <property type="term" value="F:tRNA-uracil-4 sulfurtransferase activity"/>
    <property type="evidence" value="ECO:0007669"/>
    <property type="project" value="UniProtKB-EC"/>
</dbReference>
<dbReference type="GO" id="GO:0009228">
    <property type="term" value="P:thiamine biosynthetic process"/>
    <property type="evidence" value="ECO:0007669"/>
    <property type="project" value="UniProtKB-KW"/>
</dbReference>
<dbReference type="GO" id="GO:0009229">
    <property type="term" value="P:thiamine diphosphate biosynthetic process"/>
    <property type="evidence" value="ECO:0007669"/>
    <property type="project" value="UniProtKB-UniRule"/>
</dbReference>
<dbReference type="GO" id="GO:0052837">
    <property type="term" value="P:thiazole biosynthetic process"/>
    <property type="evidence" value="ECO:0007669"/>
    <property type="project" value="InterPro"/>
</dbReference>
<dbReference type="GO" id="GO:0002937">
    <property type="term" value="P:tRNA 4-thiouridine biosynthesis"/>
    <property type="evidence" value="ECO:0007669"/>
    <property type="project" value="TreeGrafter"/>
</dbReference>
<dbReference type="CDD" id="cd01712">
    <property type="entry name" value="PPase_ThiI"/>
    <property type="match status" value="1"/>
</dbReference>
<dbReference type="CDD" id="cd00158">
    <property type="entry name" value="RHOD"/>
    <property type="match status" value="1"/>
</dbReference>
<dbReference type="CDD" id="cd11716">
    <property type="entry name" value="THUMP_ThiI"/>
    <property type="match status" value="1"/>
</dbReference>
<dbReference type="FunFam" id="3.40.50.620:FF:000029">
    <property type="entry name" value="tRNA sulfurtransferase"/>
    <property type="match status" value="1"/>
</dbReference>
<dbReference type="Gene3D" id="3.30.2130.30">
    <property type="match status" value="1"/>
</dbReference>
<dbReference type="Gene3D" id="3.40.50.620">
    <property type="entry name" value="HUPs"/>
    <property type="match status" value="1"/>
</dbReference>
<dbReference type="Gene3D" id="3.40.250.10">
    <property type="entry name" value="Rhodanese-like domain"/>
    <property type="match status" value="1"/>
</dbReference>
<dbReference type="HAMAP" id="MF_00021">
    <property type="entry name" value="ThiI"/>
    <property type="match status" value="1"/>
</dbReference>
<dbReference type="InterPro" id="IPR001763">
    <property type="entry name" value="Rhodanese-like_dom"/>
</dbReference>
<dbReference type="InterPro" id="IPR036873">
    <property type="entry name" value="Rhodanese-like_dom_sf"/>
</dbReference>
<dbReference type="InterPro" id="IPR014729">
    <property type="entry name" value="Rossmann-like_a/b/a_fold"/>
</dbReference>
<dbReference type="InterPro" id="IPR020536">
    <property type="entry name" value="ThiI_AANH"/>
</dbReference>
<dbReference type="InterPro" id="IPR054173">
    <property type="entry name" value="ThiI_fer"/>
</dbReference>
<dbReference type="InterPro" id="IPR049961">
    <property type="entry name" value="ThiI_N"/>
</dbReference>
<dbReference type="InterPro" id="IPR026340">
    <property type="entry name" value="THII_Thiazole_biosynth_dom"/>
</dbReference>
<dbReference type="InterPro" id="IPR004114">
    <property type="entry name" value="THUMP_dom"/>
</dbReference>
<dbReference type="InterPro" id="IPR049962">
    <property type="entry name" value="THUMP_ThiI"/>
</dbReference>
<dbReference type="InterPro" id="IPR003720">
    <property type="entry name" value="tRNA_STrfase"/>
</dbReference>
<dbReference type="InterPro" id="IPR050102">
    <property type="entry name" value="tRNA_sulfurtransferase_ThiI"/>
</dbReference>
<dbReference type="NCBIfam" id="TIGR04271">
    <property type="entry name" value="ThiI_C_thiazole"/>
    <property type="match status" value="1"/>
</dbReference>
<dbReference type="NCBIfam" id="TIGR00342">
    <property type="entry name" value="tRNA uracil 4-sulfurtransferase ThiI"/>
    <property type="match status" value="1"/>
</dbReference>
<dbReference type="PANTHER" id="PTHR43209">
    <property type="entry name" value="TRNA SULFURTRANSFERASE"/>
    <property type="match status" value="1"/>
</dbReference>
<dbReference type="PANTHER" id="PTHR43209:SF1">
    <property type="entry name" value="TRNA SULFURTRANSFERASE"/>
    <property type="match status" value="1"/>
</dbReference>
<dbReference type="Pfam" id="PF00581">
    <property type="entry name" value="Rhodanese"/>
    <property type="match status" value="1"/>
</dbReference>
<dbReference type="Pfam" id="PF02568">
    <property type="entry name" value="ThiI"/>
    <property type="match status" value="1"/>
</dbReference>
<dbReference type="Pfam" id="PF22025">
    <property type="entry name" value="ThiI_fer"/>
    <property type="match status" value="1"/>
</dbReference>
<dbReference type="Pfam" id="PF02926">
    <property type="entry name" value="THUMP"/>
    <property type="match status" value="1"/>
</dbReference>
<dbReference type="SMART" id="SM00981">
    <property type="entry name" value="THUMP"/>
    <property type="match status" value="1"/>
</dbReference>
<dbReference type="SUPFAM" id="SSF52402">
    <property type="entry name" value="Adenine nucleotide alpha hydrolases-like"/>
    <property type="match status" value="1"/>
</dbReference>
<dbReference type="SUPFAM" id="SSF52821">
    <property type="entry name" value="Rhodanese/Cell cycle control phosphatase"/>
    <property type="match status" value="1"/>
</dbReference>
<dbReference type="SUPFAM" id="SSF143437">
    <property type="entry name" value="THUMP domain-like"/>
    <property type="match status" value="1"/>
</dbReference>
<dbReference type="PROSITE" id="PS50206">
    <property type="entry name" value="RHODANESE_3"/>
    <property type="match status" value="1"/>
</dbReference>
<dbReference type="PROSITE" id="PS51165">
    <property type="entry name" value="THUMP"/>
    <property type="match status" value="1"/>
</dbReference>
<organism>
    <name type="scientific">Shewanella amazonensis (strain ATCC BAA-1098 / SB2B)</name>
    <dbReference type="NCBI Taxonomy" id="326297"/>
    <lineage>
        <taxon>Bacteria</taxon>
        <taxon>Pseudomonadati</taxon>
        <taxon>Pseudomonadota</taxon>
        <taxon>Gammaproteobacteria</taxon>
        <taxon>Alteromonadales</taxon>
        <taxon>Shewanellaceae</taxon>
        <taxon>Shewanella</taxon>
    </lineage>
</organism>
<accession>A1S8C9</accession>
<gene>
    <name evidence="1" type="primary">thiI</name>
    <name type="ordered locus">Sama_2431</name>
</gene>
<sequence>MKFIVKLYPEIMIKSKPVRMRFTKMLESNIRNVLKKIDEDAKVQRQWDKIMVKVPKDKPELTELFAERLAHIPGIHHVLQVAEYDFETVDDIYQLALPVYRDMLKDKTFCVRVKRAGQHDFNSIEVERYVGGGLNQFTEAKGVQLKNPDVTIQLEIDRDKLYMVSQRIEGLGGFPIAAQEDVLSLISGGFDSGVASFQFIKKGSRTHYCFFNLGGAQHEIGVKQVAYHLWKTYGESHKVKFVSVPFEEVVTEILERIENGQMGVVLKRMMMRAATRVAERMGIQALVTGESLGQVSSQTLTNLNVIDRSTDLLILRPLISMDKPDIIREARRIGTEDFAASMPEYCGVISQRPTVKAVLSKVEAEEQKFSEDLLDRVLAKAEVIDIRDIAVATSERVTETETVSSAAGNEVIIDIRAPEEEESRPLDVDGVEVKVIPFFKLATAFAELDKDKTYLLYCERGVMSKLQALYLQEQGYNNVKVYRP</sequence>
<feature type="chain" id="PRO_1000074262" description="tRNA sulfurtransferase">
    <location>
        <begin position="1"/>
        <end position="484"/>
    </location>
</feature>
<feature type="domain" description="THUMP" evidence="1">
    <location>
        <begin position="63"/>
        <end position="167"/>
    </location>
</feature>
<feature type="domain" description="Rhodanese" evidence="1">
    <location>
        <begin position="406"/>
        <end position="484"/>
    </location>
</feature>
<feature type="active site" description="Cysteine persulfide intermediate" evidence="1">
    <location>
        <position position="458"/>
    </location>
</feature>
<feature type="binding site" evidence="1">
    <location>
        <begin position="185"/>
        <end position="186"/>
    </location>
    <ligand>
        <name>ATP</name>
        <dbReference type="ChEBI" id="CHEBI:30616"/>
    </ligand>
</feature>
<feature type="binding site" evidence="1">
    <location>
        <position position="267"/>
    </location>
    <ligand>
        <name>ATP</name>
        <dbReference type="ChEBI" id="CHEBI:30616"/>
    </ligand>
</feature>
<feature type="binding site" evidence="1">
    <location>
        <position position="289"/>
    </location>
    <ligand>
        <name>ATP</name>
        <dbReference type="ChEBI" id="CHEBI:30616"/>
    </ligand>
</feature>
<feature type="binding site" evidence="1">
    <location>
        <position position="298"/>
    </location>
    <ligand>
        <name>ATP</name>
        <dbReference type="ChEBI" id="CHEBI:30616"/>
    </ligand>
</feature>
<feature type="disulfide bond" description="Redox-active" evidence="1">
    <location>
        <begin position="346"/>
        <end position="458"/>
    </location>
</feature>
<protein>
    <recommendedName>
        <fullName evidence="1">tRNA sulfurtransferase</fullName>
        <ecNumber evidence="1">2.8.1.4</ecNumber>
    </recommendedName>
    <alternativeName>
        <fullName evidence="1">Sulfur carrier protein ThiS sulfurtransferase</fullName>
    </alternativeName>
    <alternativeName>
        <fullName evidence="1">Thiamine biosynthesis protein ThiI</fullName>
    </alternativeName>
    <alternativeName>
        <fullName evidence="1">tRNA 4-thiouridine synthase</fullName>
    </alternativeName>
</protein>
<reference key="1">
    <citation type="submission" date="2006-12" db="EMBL/GenBank/DDBJ databases">
        <title>Complete sequence of Shewanella amazonensis SB2B.</title>
        <authorList>
            <consortium name="US DOE Joint Genome Institute"/>
            <person name="Copeland A."/>
            <person name="Lucas S."/>
            <person name="Lapidus A."/>
            <person name="Barry K."/>
            <person name="Detter J.C."/>
            <person name="Glavina del Rio T."/>
            <person name="Hammon N."/>
            <person name="Israni S."/>
            <person name="Dalin E."/>
            <person name="Tice H."/>
            <person name="Pitluck S."/>
            <person name="Munk A.C."/>
            <person name="Brettin T."/>
            <person name="Bruce D."/>
            <person name="Han C."/>
            <person name="Tapia R."/>
            <person name="Gilna P."/>
            <person name="Schmutz J."/>
            <person name="Larimer F."/>
            <person name="Land M."/>
            <person name="Hauser L."/>
            <person name="Kyrpides N."/>
            <person name="Mikhailova N."/>
            <person name="Fredrickson J."/>
            <person name="Richardson P."/>
        </authorList>
    </citation>
    <scope>NUCLEOTIDE SEQUENCE [LARGE SCALE GENOMIC DNA]</scope>
    <source>
        <strain>ATCC BAA-1098 / SB2B</strain>
    </source>
</reference>
<name>THII_SHEAM</name>
<keyword id="KW-0067">ATP-binding</keyword>
<keyword id="KW-0963">Cytoplasm</keyword>
<keyword id="KW-1015">Disulfide bond</keyword>
<keyword id="KW-0547">Nucleotide-binding</keyword>
<keyword id="KW-0676">Redox-active center</keyword>
<keyword id="KW-1185">Reference proteome</keyword>
<keyword id="KW-0694">RNA-binding</keyword>
<keyword id="KW-0784">Thiamine biosynthesis</keyword>
<keyword id="KW-0808">Transferase</keyword>
<keyword id="KW-0820">tRNA-binding</keyword>
<proteinExistence type="inferred from homology"/>
<evidence type="ECO:0000255" key="1">
    <source>
        <dbReference type="HAMAP-Rule" id="MF_00021"/>
    </source>
</evidence>